<name>RPOZ_STAAB</name>
<sequence length="72" mass="8150">MLNPPLNQLTSQIKSKYLIATTAAKRAREIDEQPETELLSEYHSFKPVGRALEEIADGKIRPVISSDYYGKE</sequence>
<reference key="1">
    <citation type="journal article" date="2007" name="PLoS ONE">
        <title>Molecular correlates of host specialization in Staphylococcus aureus.</title>
        <authorList>
            <person name="Herron-Olson L."/>
            <person name="Fitzgerald J.R."/>
            <person name="Musser J.M."/>
            <person name="Kapur V."/>
        </authorList>
    </citation>
    <scope>NUCLEOTIDE SEQUENCE [LARGE SCALE GENOMIC DNA]</scope>
    <source>
        <strain>bovine RF122 / ET3-1</strain>
    </source>
</reference>
<protein>
    <recommendedName>
        <fullName evidence="1">DNA-directed RNA polymerase subunit omega</fullName>
        <shortName evidence="1">RNAP omega subunit</shortName>
        <ecNumber evidence="1">2.7.7.6</ecNumber>
    </recommendedName>
    <alternativeName>
        <fullName evidence="1">RNA polymerase omega subunit</fullName>
    </alternativeName>
    <alternativeName>
        <fullName evidence="1">Transcriptase subunit omega</fullName>
    </alternativeName>
</protein>
<evidence type="ECO:0000255" key="1">
    <source>
        <dbReference type="HAMAP-Rule" id="MF_00366"/>
    </source>
</evidence>
<gene>
    <name evidence="1" type="primary">rpoZ</name>
    <name type="ordered locus">SAB1074</name>
</gene>
<proteinExistence type="inferred from homology"/>
<accession>Q2YXF8</accession>
<dbReference type="EC" id="2.7.7.6" evidence="1"/>
<dbReference type="EMBL" id="AJ938182">
    <property type="protein sequence ID" value="CAI80763.1"/>
    <property type="molecule type" value="Genomic_DNA"/>
</dbReference>
<dbReference type="RefSeq" id="WP_000933956.1">
    <property type="nucleotide sequence ID" value="NC_007622.1"/>
</dbReference>
<dbReference type="SMR" id="Q2YXF8"/>
<dbReference type="KEGG" id="sab:SAB1074"/>
<dbReference type="HOGENOM" id="CLU_125406_6_0_9"/>
<dbReference type="GO" id="GO:0000428">
    <property type="term" value="C:DNA-directed RNA polymerase complex"/>
    <property type="evidence" value="ECO:0007669"/>
    <property type="project" value="UniProtKB-KW"/>
</dbReference>
<dbReference type="GO" id="GO:0003677">
    <property type="term" value="F:DNA binding"/>
    <property type="evidence" value="ECO:0007669"/>
    <property type="project" value="UniProtKB-UniRule"/>
</dbReference>
<dbReference type="GO" id="GO:0003899">
    <property type="term" value="F:DNA-directed RNA polymerase activity"/>
    <property type="evidence" value="ECO:0007669"/>
    <property type="project" value="UniProtKB-UniRule"/>
</dbReference>
<dbReference type="GO" id="GO:0006351">
    <property type="term" value="P:DNA-templated transcription"/>
    <property type="evidence" value="ECO:0007669"/>
    <property type="project" value="UniProtKB-UniRule"/>
</dbReference>
<dbReference type="Gene3D" id="3.90.940.10">
    <property type="match status" value="1"/>
</dbReference>
<dbReference type="HAMAP" id="MF_00366">
    <property type="entry name" value="RNApol_bact_RpoZ"/>
    <property type="match status" value="1"/>
</dbReference>
<dbReference type="InterPro" id="IPR003716">
    <property type="entry name" value="DNA-dir_RNA_pol_omega"/>
</dbReference>
<dbReference type="InterPro" id="IPR006110">
    <property type="entry name" value="Pol_omega/Rpo6/RPB6"/>
</dbReference>
<dbReference type="InterPro" id="IPR036161">
    <property type="entry name" value="RPB6/omega-like_sf"/>
</dbReference>
<dbReference type="NCBIfam" id="TIGR00690">
    <property type="entry name" value="rpoZ"/>
    <property type="match status" value="1"/>
</dbReference>
<dbReference type="PANTHER" id="PTHR34476">
    <property type="entry name" value="DNA-DIRECTED RNA POLYMERASE SUBUNIT OMEGA"/>
    <property type="match status" value="1"/>
</dbReference>
<dbReference type="PANTHER" id="PTHR34476:SF1">
    <property type="entry name" value="DNA-DIRECTED RNA POLYMERASE SUBUNIT OMEGA"/>
    <property type="match status" value="1"/>
</dbReference>
<dbReference type="Pfam" id="PF01192">
    <property type="entry name" value="RNA_pol_Rpb6"/>
    <property type="match status" value="1"/>
</dbReference>
<dbReference type="SMART" id="SM01409">
    <property type="entry name" value="RNA_pol_Rpb6"/>
    <property type="match status" value="1"/>
</dbReference>
<dbReference type="SUPFAM" id="SSF63562">
    <property type="entry name" value="RPB6/omega subunit-like"/>
    <property type="match status" value="1"/>
</dbReference>
<organism>
    <name type="scientific">Staphylococcus aureus (strain bovine RF122 / ET3-1)</name>
    <dbReference type="NCBI Taxonomy" id="273036"/>
    <lineage>
        <taxon>Bacteria</taxon>
        <taxon>Bacillati</taxon>
        <taxon>Bacillota</taxon>
        <taxon>Bacilli</taxon>
        <taxon>Bacillales</taxon>
        <taxon>Staphylococcaceae</taxon>
        <taxon>Staphylococcus</taxon>
    </lineage>
</organism>
<comment type="function">
    <text evidence="1">Promotes RNA polymerase assembly. Latches the N- and C-terminal regions of the beta' subunit thereby facilitating its interaction with the beta and alpha subunits.</text>
</comment>
<comment type="catalytic activity">
    <reaction evidence="1">
        <text>RNA(n) + a ribonucleoside 5'-triphosphate = RNA(n+1) + diphosphate</text>
        <dbReference type="Rhea" id="RHEA:21248"/>
        <dbReference type="Rhea" id="RHEA-COMP:14527"/>
        <dbReference type="Rhea" id="RHEA-COMP:17342"/>
        <dbReference type="ChEBI" id="CHEBI:33019"/>
        <dbReference type="ChEBI" id="CHEBI:61557"/>
        <dbReference type="ChEBI" id="CHEBI:140395"/>
        <dbReference type="EC" id="2.7.7.6"/>
    </reaction>
</comment>
<comment type="subunit">
    <text evidence="1">The RNAP catalytic core consists of 2 alpha, 1 beta, 1 beta' and 1 omega subunit. When a sigma factor is associated with the core the holoenzyme is formed, which can initiate transcription.</text>
</comment>
<comment type="similarity">
    <text evidence="1">Belongs to the RNA polymerase subunit omega family.</text>
</comment>
<keyword id="KW-0240">DNA-directed RNA polymerase</keyword>
<keyword id="KW-0548">Nucleotidyltransferase</keyword>
<keyword id="KW-0804">Transcription</keyword>
<keyword id="KW-0808">Transferase</keyword>
<feature type="chain" id="PRO_0000237509" description="DNA-directed RNA polymerase subunit omega">
    <location>
        <begin position="1"/>
        <end position="72"/>
    </location>
</feature>